<protein>
    <recommendedName>
        <fullName>Glucuronoxylanase XynC</fullName>
        <ecNumber>3.2.1.136</ecNumber>
    </recommendedName>
    <alternativeName>
        <fullName>Endoxylanase XynC</fullName>
    </alternativeName>
    <alternativeName>
        <fullName>Glucuronoxylan xylanohydrolase</fullName>
    </alternativeName>
</protein>
<keyword id="KW-0119">Carbohydrate metabolism</keyword>
<keyword id="KW-0326">Glycosidase</keyword>
<keyword id="KW-0378">Hydrolase</keyword>
<keyword id="KW-0624">Polysaccharide degradation</keyword>
<keyword id="KW-0964">Secreted</keyword>
<keyword id="KW-0732">Signal</keyword>
<keyword id="KW-0858">Xylan degradation</keyword>
<evidence type="ECO:0000250" key="1"/>
<evidence type="ECO:0000255" key="2"/>
<evidence type="ECO:0000305" key="3"/>
<accession>Q6YK37</accession>
<comment type="function">
    <text evidence="1">Catalyzes the depolymerization of methylglucuronoxylan (MeGAXn). It cleaves the beta-1,4-xylosidic bond penultimate to that linking carbon one of the xylose residue substituted with alpha-1,2-linked 4-O-methyl-D-glucuronate (MeGA) (By similarity).</text>
</comment>
<comment type="catalytic activity">
    <reaction>
        <text>Endohydrolysis of (1-&gt;4)-beta-D-xylosyl links in some glucuronoarabinoxylans.</text>
        <dbReference type="EC" id="3.2.1.136"/>
    </reaction>
</comment>
<comment type="pathway">
    <text>Glycan degradation; xylan degradation.</text>
</comment>
<comment type="subcellular location">
    <subcellularLocation>
        <location evidence="1">Secreted</location>
    </subcellularLocation>
</comment>
<comment type="similarity">
    <text evidence="3">Belongs to the glycosyl hydrolase 30 family.</text>
</comment>
<comment type="sequence caution" evidence="3">
    <conflict type="frameshift">
        <sequence resource="EMBL-CDS" id="AAN07016"/>
    </conflict>
</comment>
<feature type="signal peptide" evidence="2">
    <location>
        <begin position="1"/>
        <end position="33"/>
    </location>
</feature>
<feature type="chain" id="PRO_0000278647" description="Glucuronoxylanase XynC">
    <location>
        <begin position="34"/>
        <end position="423"/>
    </location>
</feature>
<feature type="active site" description="Proton donor" evidence="1">
    <location>
        <position position="172"/>
    </location>
</feature>
<feature type="active site" description="Nucleophile" evidence="1">
    <location>
        <position position="261"/>
    </location>
</feature>
<organism>
    <name type="scientific">Bacillus subtilis</name>
    <dbReference type="NCBI Taxonomy" id="1423"/>
    <lineage>
        <taxon>Bacteria</taxon>
        <taxon>Bacillati</taxon>
        <taxon>Bacillota</taxon>
        <taxon>Bacilli</taxon>
        <taxon>Bacillales</taxon>
        <taxon>Bacillaceae</taxon>
        <taxon>Bacillus</taxon>
    </lineage>
</organism>
<gene>
    <name type="primary">xynC</name>
    <name type="synonym">ynfF</name>
</gene>
<proteinExistence type="inferred from homology"/>
<dbReference type="EC" id="3.2.1.136"/>
<dbReference type="EMBL" id="AY137375">
    <property type="protein sequence ID" value="AAN07016.1"/>
    <property type="status" value="ALT_FRAME"/>
    <property type="molecule type" value="Genomic_DNA"/>
</dbReference>
<dbReference type="SMR" id="Q6YK37"/>
<dbReference type="STRING" id="483913.AN935_09455"/>
<dbReference type="CAZy" id="GH30">
    <property type="family name" value="Glycoside Hydrolase Family 30"/>
</dbReference>
<dbReference type="UniPathway" id="UPA00114"/>
<dbReference type="GO" id="GO:0005576">
    <property type="term" value="C:extracellular region"/>
    <property type="evidence" value="ECO:0007669"/>
    <property type="project" value="UniProtKB-SubCell"/>
</dbReference>
<dbReference type="GO" id="GO:0016020">
    <property type="term" value="C:membrane"/>
    <property type="evidence" value="ECO:0007669"/>
    <property type="project" value="GOC"/>
</dbReference>
<dbReference type="GO" id="GO:0004348">
    <property type="term" value="F:glucosylceramidase activity"/>
    <property type="evidence" value="ECO:0007669"/>
    <property type="project" value="InterPro"/>
</dbReference>
<dbReference type="GO" id="GO:0033940">
    <property type="term" value="F:glucuronoarabinoxylan endo-1,4-beta-xylanase activity"/>
    <property type="evidence" value="ECO:0007669"/>
    <property type="project" value="UniProtKB-EC"/>
</dbReference>
<dbReference type="GO" id="GO:0006665">
    <property type="term" value="P:sphingolipid metabolic process"/>
    <property type="evidence" value="ECO:0007669"/>
    <property type="project" value="InterPro"/>
</dbReference>
<dbReference type="GO" id="GO:0045493">
    <property type="term" value="P:xylan catabolic process"/>
    <property type="evidence" value="ECO:0007669"/>
    <property type="project" value="UniProtKB-UniPathway"/>
</dbReference>
<dbReference type="FunFam" id="2.60.40.1180:FF:000068">
    <property type="entry name" value="Glucuronoxylanase XynC"/>
    <property type="match status" value="1"/>
</dbReference>
<dbReference type="FunFam" id="3.20.20.80:FF:000234">
    <property type="entry name" value="Glucuronoxylanase XynC"/>
    <property type="match status" value="1"/>
</dbReference>
<dbReference type="Gene3D" id="3.20.20.80">
    <property type="entry name" value="Glycosidases"/>
    <property type="match status" value="1"/>
</dbReference>
<dbReference type="Gene3D" id="2.60.40.1180">
    <property type="entry name" value="Golgi alpha-mannosidase II"/>
    <property type="match status" value="1"/>
</dbReference>
<dbReference type="InterPro" id="IPR001139">
    <property type="entry name" value="Glyco_hydro_30"/>
</dbReference>
<dbReference type="InterPro" id="IPR013780">
    <property type="entry name" value="Glyco_hydro_b"/>
</dbReference>
<dbReference type="InterPro" id="IPR017853">
    <property type="entry name" value="Glycoside_hydrolase_SF"/>
</dbReference>
<dbReference type="PANTHER" id="PTHR11069">
    <property type="entry name" value="GLUCOSYLCERAMIDASE"/>
    <property type="match status" value="1"/>
</dbReference>
<dbReference type="PANTHER" id="PTHR11069:SF38">
    <property type="entry name" value="GLUCURONOXYLANASE XYNC"/>
    <property type="match status" value="1"/>
</dbReference>
<dbReference type="SUPFAM" id="SSF51445">
    <property type="entry name" value="(Trans)glycosidases"/>
    <property type="match status" value="1"/>
</dbReference>
<dbReference type="SUPFAM" id="SSF51011">
    <property type="entry name" value="Glycosyl hydrolase domain"/>
    <property type="match status" value="1"/>
</dbReference>
<name>XYNC_BACIU</name>
<reference key="1">
    <citation type="journal article" date="2004" name="FEMS Microbiol. Lett.">
        <title>Molecular characterization and analysis of the operon encoding the antifungal lipopeptide bacillomycin D.</title>
        <authorList>
            <person name="Moyne A.-L."/>
            <person name="Cleveland T.E."/>
            <person name="Tuzun S."/>
        </authorList>
    </citation>
    <scope>NUCLEOTIDE SEQUENCE [GENOMIC DNA]</scope>
    <source>
        <strain>AU195</strain>
    </source>
</reference>
<sequence length="423" mass="47840">MMSSVKKTICVLLVCFTMMSVMLLGPGVTEVSAASDAKVNISADRQVIRGFGGMNHPAWIGDLTAAQRETAFGNGQNQLGFSVLRIHVDENRNNWYKEVETAKSAIKHGAIVFASPWNPPNDMVETFNHNGDTSAKRLRYDKYAAYAQHLNDFVNFMKSNGVNLYAISMQNEPDYAHEWTWWTPQEILRFMRENAGSINARVIAPESFQYLKNISDPILNDPQALRNMDILGTHLYGTQVSQFPYPLFKQKGGGKELWMTEVYYPNSDNNSADRWPEALGVSEHIHHSMVEGDFQAYVWWYIRRSYGPMKEDGMISKRGYNMAHFSKFVRPGYVRIDATKNPEPNVYVSAYKGDNKVVIVAINKNNTGVNQNFVLQNGTASQVSRWITSSSSNLQPGTDLKVTDNHFWAHLPAQSVTTFVVKR</sequence>